<keyword id="KW-0004">4Fe-4S</keyword>
<keyword id="KW-0028">Amino-acid biosynthesis</keyword>
<keyword id="KW-0100">Branched-chain amino acid biosynthesis</keyword>
<keyword id="KW-0408">Iron</keyword>
<keyword id="KW-0411">Iron-sulfur</keyword>
<keyword id="KW-0432">Leucine biosynthesis</keyword>
<keyword id="KW-0456">Lyase</keyword>
<keyword id="KW-0479">Metal-binding</keyword>
<keyword id="KW-1185">Reference proteome</keyword>
<evidence type="ECO:0000255" key="1">
    <source>
        <dbReference type="HAMAP-Rule" id="MF_01026"/>
    </source>
</evidence>
<evidence type="ECO:0000305" key="2"/>
<dbReference type="EC" id="4.2.1.33" evidence="1"/>
<dbReference type="EMBL" id="CP000023">
    <property type="protein sequence ID" value="AAV60837.1"/>
    <property type="status" value="ALT_INIT"/>
    <property type="molecule type" value="Genomic_DNA"/>
</dbReference>
<dbReference type="RefSeq" id="WP_041828253.1">
    <property type="nucleotide sequence ID" value="NC_006448.1"/>
</dbReference>
<dbReference type="SMR" id="Q5M406"/>
<dbReference type="STRING" id="264199.stu1201"/>
<dbReference type="DNASU" id="3165608"/>
<dbReference type="GeneID" id="66898994"/>
<dbReference type="KEGG" id="stl:stu1201"/>
<dbReference type="PATRIC" id="fig|264199.4.peg.1183"/>
<dbReference type="eggNOG" id="COG0065">
    <property type="taxonomic scope" value="Bacteria"/>
</dbReference>
<dbReference type="HOGENOM" id="CLU_006714_3_4_9"/>
<dbReference type="UniPathway" id="UPA00048">
    <property type="reaction ID" value="UER00071"/>
</dbReference>
<dbReference type="Proteomes" id="UP000001170">
    <property type="component" value="Chromosome"/>
</dbReference>
<dbReference type="GO" id="GO:0003861">
    <property type="term" value="F:3-isopropylmalate dehydratase activity"/>
    <property type="evidence" value="ECO:0007669"/>
    <property type="project" value="UniProtKB-UniRule"/>
</dbReference>
<dbReference type="GO" id="GO:0051539">
    <property type="term" value="F:4 iron, 4 sulfur cluster binding"/>
    <property type="evidence" value="ECO:0007669"/>
    <property type="project" value="UniProtKB-KW"/>
</dbReference>
<dbReference type="GO" id="GO:0046872">
    <property type="term" value="F:metal ion binding"/>
    <property type="evidence" value="ECO:0007669"/>
    <property type="project" value="UniProtKB-KW"/>
</dbReference>
<dbReference type="GO" id="GO:0009098">
    <property type="term" value="P:L-leucine biosynthetic process"/>
    <property type="evidence" value="ECO:0007669"/>
    <property type="project" value="UniProtKB-UniRule"/>
</dbReference>
<dbReference type="CDD" id="cd01583">
    <property type="entry name" value="IPMI"/>
    <property type="match status" value="1"/>
</dbReference>
<dbReference type="Gene3D" id="3.30.499.10">
    <property type="entry name" value="Aconitase, domain 3"/>
    <property type="match status" value="2"/>
</dbReference>
<dbReference type="HAMAP" id="MF_01026">
    <property type="entry name" value="LeuC_type1"/>
    <property type="match status" value="1"/>
</dbReference>
<dbReference type="InterPro" id="IPR004430">
    <property type="entry name" value="3-IsopropMal_deHydase_lsu"/>
</dbReference>
<dbReference type="InterPro" id="IPR015931">
    <property type="entry name" value="Acnase/IPM_dHydase_lsu_aba_1/3"/>
</dbReference>
<dbReference type="InterPro" id="IPR001030">
    <property type="entry name" value="Acoase/IPM_deHydtase_lsu_aba"/>
</dbReference>
<dbReference type="InterPro" id="IPR018136">
    <property type="entry name" value="Aconitase_4Fe-4S_BS"/>
</dbReference>
<dbReference type="InterPro" id="IPR036008">
    <property type="entry name" value="Aconitase_4Fe-4S_dom"/>
</dbReference>
<dbReference type="InterPro" id="IPR050067">
    <property type="entry name" value="IPM_dehydratase_rel_enz"/>
</dbReference>
<dbReference type="InterPro" id="IPR033941">
    <property type="entry name" value="IPMI_cat"/>
</dbReference>
<dbReference type="NCBIfam" id="TIGR00170">
    <property type="entry name" value="leuC"/>
    <property type="match status" value="1"/>
</dbReference>
<dbReference type="NCBIfam" id="NF004016">
    <property type="entry name" value="PRK05478.1"/>
    <property type="match status" value="1"/>
</dbReference>
<dbReference type="NCBIfam" id="NF009116">
    <property type="entry name" value="PRK12466.1"/>
    <property type="match status" value="1"/>
</dbReference>
<dbReference type="PANTHER" id="PTHR43822:SF9">
    <property type="entry name" value="3-ISOPROPYLMALATE DEHYDRATASE"/>
    <property type="match status" value="1"/>
</dbReference>
<dbReference type="PANTHER" id="PTHR43822">
    <property type="entry name" value="HOMOACONITASE, MITOCHONDRIAL-RELATED"/>
    <property type="match status" value="1"/>
</dbReference>
<dbReference type="Pfam" id="PF00330">
    <property type="entry name" value="Aconitase"/>
    <property type="match status" value="1"/>
</dbReference>
<dbReference type="PRINTS" id="PR00415">
    <property type="entry name" value="ACONITASE"/>
</dbReference>
<dbReference type="SUPFAM" id="SSF53732">
    <property type="entry name" value="Aconitase iron-sulfur domain"/>
    <property type="match status" value="1"/>
</dbReference>
<dbReference type="PROSITE" id="PS00450">
    <property type="entry name" value="ACONITASE_1"/>
    <property type="match status" value="1"/>
</dbReference>
<dbReference type="PROSITE" id="PS01244">
    <property type="entry name" value="ACONITASE_2"/>
    <property type="match status" value="1"/>
</dbReference>
<protein>
    <recommendedName>
        <fullName evidence="1">3-isopropylmalate dehydratase large subunit</fullName>
        <ecNumber evidence="1">4.2.1.33</ecNumber>
    </recommendedName>
    <alternativeName>
        <fullName evidence="1">Alpha-IPM isomerase</fullName>
        <shortName evidence="1">IPMI</shortName>
    </alternativeName>
    <alternativeName>
        <fullName evidence="1">Isopropylmalate isomerase</fullName>
    </alternativeName>
</protein>
<proteinExistence type="inferred from homology"/>
<reference key="1">
    <citation type="journal article" date="2004" name="Nat. Biotechnol.">
        <title>Complete sequence and comparative genome analysis of the dairy bacterium Streptococcus thermophilus.</title>
        <authorList>
            <person name="Bolotin A."/>
            <person name="Quinquis B."/>
            <person name="Renault P."/>
            <person name="Sorokin A."/>
            <person name="Ehrlich S.D."/>
            <person name="Kulakauskas S."/>
            <person name="Lapidus A."/>
            <person name="Goltsman E."/>
            <person name="Mazur M."/>
            <person name="Pusch G.D."/>
            <person name="Fonstein M."/>
            <person name="Overbeek R."/>
            <person name="Kyprides N."/>
            <person name="Purnelle B."/>
            <person name="Prozzi D."/>
            <person name="Ngui K."/>
            <person name="Masuy D."/>
            <person name="Hancy F."/>
            <person name="Burteau S."/>
            <person name="Boutry M."/>
            <person name="Delcour J."/>
            <person name="Goffeau A."/>
            <person name="Hols P."/>
        </authorList>
    </citation>
    <scope>NUCLEOTIDE SEQUENCE [LARGE SCALE GENOMIC DNA]</scope>
    <source>
        <strain>ATCC BAA-250 / LMG 18311</strain>
    </source>
</reference>
<name>LEUC_STRT2</name>
<organism>
    <name type="scientific">Streptococcus thermophilus (strain ATCC BAA-250 / LMG 18311)</name>
    <dbReference type="NCBI Taxonomy" id="264199"/>
    <lineage>
        <taxon>Bacteria</taxon>
        <taxon>Bacillati</taxon>
        <taxon>Bacillota</taxon>
        <taxon>Bacilli</taxon>
        <taxon>Lactobacillales</taxon>
        <taxon>Streptococcaceae</taxon>
        <taxon>Streptococcus</taxon>
    </lineage>
</organism>
<gene>
    <name evidence="1" type="primary">leuC</name>
    <name type="ordered locus">stu1201</name>
</gene>
<comment type="function">
    <text evidence="1">Catalyzes the isomerization between 2-isopropylmalate and 3-isopropylmalate, via the formation of 2-isopropylmaleate.</text>
</comment>
<comment type="catalytic activity">
    <reaction evidence="1">
        <text>(2R,3S)-3-isopropylmalate = (2S)-2-isopropylmalate</text>
        <dbReference type="Rhea" id="RHEA:32287"/>
        <dbReference type="ChEBI" id="CHEBI:1178"/>
        <dbReference type="ChEBI" id="CHEBI:35121"/>
        <dbReference type="EC" id="4.2.1.33"/>
    </reaction>
</comment>
<comment type="cofactor">
    <cofactor evidence="1">
        <name>[4Fe-4S] cluster</name>
        <dbReference type="ChEBI" id="CHEBI:49883"/>
    </cofactor>
    <text evidence="1">Binds 1 [4Fe-4S] cluster per subunit.</text>
</comment>
<comment type="pathway">
    <text evidence="1">Amino-acid biosynthesis; L-leucine biosynthesis; L-leucine from 3-methyl-2-oxobutanoate: step 2/4.</text>
</comment>
<comment type="subunit">
    <text evidence="1">Heterodimer of LeuC and LeuD.</text>
</comment>
<comment type="similarity">
    <text evidence="1">Belongs to the aconitase/IPM isomerase family. LeuC type 1 subfamily.</text>
</comment>
<comment type="sequence caution" evidence="2">
    <conflict type="erroneous initiation">
        <sequence resource="EMBL-CDS" id="AAV60837"/>
    </conflict>
</comment>
<accession>Q5M406</accession>
<feature type="chain" id="PRO_0000076823" description="3-isopropylmalate dehydratase large subunit">
    <location>
        <begin position="1"/>
        <end position="460"/>
    </location>
</feature>
<feature type="binding site" evidence="1">
    <location>
        <position position="338"/>
    </location>
    <ligand>
        <name>[4Fe-4S] cluster</name>
        <dbReference type="ChEBI" id="CHEBI:49883"/>
    </ligand>
</feature>
<feature type="binding site" evidence="1">
    <location>
        <position position="398"/>
    </location>
    <ligand>
        <name>[4Fe-4S] cluster</name>
        <dbReference type="ChEBI" id="CHEBI:49883"/>
    </ligand>
</feature>
<feature type="binding site" evidence="1">
    <location>
        <position position="401"/>
    </location>
    <ligand>
        <name>[4Fe-4S] cluster</name>
        <dbReference type="ChEBI" id="CHEBI:49883"/>
    </ligand>
</feature>
<sequence length="460" mass="50911">MSGKSIFDKLWDRHVITGDEGQPQLMYVDQHYIHEVTSPQAFQGLRDAGRKVRRPDLTFGTFDHNVPTVNIFDIRDAISKAQIDKLAENVIEFGIDNASHGSDKQGIVHMVGPETGRTQPGKFIVCGDSHTATHGAFGTIAFGIGTSEVEHVFATQTLWQVKPKKMLVEFTGNPQKGIYSKDYILALIAKYGVACGVGYVVEYRGEAIDRLTMEERMTICNMSIEFGSKMGIMNPDQTTYDYMRGRECVPEDFDAAVADWKTLVSDDDAEYDKVIRMDVSELAPMVTWGTNPSMGVDFDTPFPEVRDMNDERAYHYMGLRPGQKAEDINLGYIFIGSCTNARLSDLQLAARIVKGKKISPNLTAIVVPGSRPVKRAAEKIGLDKIFKDAGFEWREPGCSMCLGMNPDKVPDGVHCASTSNRNFEDRQGFGAKTHLCSPAMAAAAAISGHFVDVRRMPEVQ</sequence>